<dbReference type="EC" id="1.3.1.91" evidence="7"/>
<dbReference type="EC" id="1.3.1.-" evidence="4"/>
<dbReference type="EMBL" id="CU329671">
    <property type="protein sequence ID" value="CAA21245.1"/>
    <property type="molecule type" value="Genomic_DNA"/>
</dbReference>
<dbReference type="PIR" id="T39634">
    <property type="entry name" value="T39634"/>
</dbReference>
<dbReference type="RefSeq" id="NP_595439.1">
    <property type="nucleotide sequence ID" value="NM_001021347.2"/>
</dbReference>
<dbReference type="SMR" id="O74731"/>
<dbReference type="BioGRID" id="276733">
    <property type="interactions" value="12"/>
</dbReference>
<dbReference type="FunCoup" id="O74731">
    <property type="interactions" value="635"/>
</dbReference>
<dbReference type="STRING" id="284812.O74731"/>
<dbReference type="PaxDb" id="4896-SPBC1709.06.1"/>
<dbReference type="EnsemblFungi" id="SPBC1709.06.1">
    <property type="protein sequence ID" value="SPBC1709.06.1:pep"/>
    <property type="gene ID" value="SPBC1709.06"/>
</dbReference>
<dbReference type="GeneID" id="2540200"/>
<dbReference type="KEGG" id="spo:2540200"/>
<dbReference type="PomBase" id="SPBC1709.06">
    <property type="gene designation" value="dus2"/>
</dbReference>
<dbReference type="VEuPathDB" id="FungiDB:SPBC1709.06"/>
<dbReference type="eggNOG" id="KOG2334">
    <property type="taxonomic scope" value="Eukaryota"/>
</dbReference>
<dbReference type="HOGENOM" id="CLU_013299_3_0_1"/>
<dbReference type="InParanoid" id="O74731"/>
<dbReference type="OMA" id="GPIRTNS"/>
<dbReference type="PhylomeDB" id="O74731"/>
<dbReference type="PRO" id="PR:O74731"/>
<dbReference type="Proteomes" id="UP000002485">
    <property type="component" value="Chromosome II"/>
</dbReference>
<dbReference type="GO" id="GO:0005737">
    <property type="term" value="C:cytoplasm"/>
    <property type="evidence" value="ECO:0000318"/>
    <property type="project" value="GO_Central"/>
</dbReference>
<dbReference type="GO" id="GO:0005634">
    <property type="term" value="C:nucleus"/>
    <property type="evidence" value="ECO:0007005"/>
    <property type="project" value="PomBase"/>
</dbReference>
<dbReference type="GO" id="GO:0050660">
    <property type="term" value="F:flavin adenine dinucleotide binding"/>
    <property type="evidence" value="ECO:0007669"/>
    <property type="project" value="InterPro"/>
</dbReference>
<dbReference type="GO" id="GO:0106414">
    <property type="term" value="F:mRNA dihydrouridine synthase activity"/>
    <property type="evidence" value="ECO:0007669"/>
    <property type="project" value="RHEA"/>
</dbReference>
<dbReference type="GO" id="GO:0017150">
    <property type="term" value="F:tRNA dihydrouridine synthase activity"/>
    <property type="evidence" value="ECO:0000318"/>
    <property type="project" value="GO_Central"/>
</dbReference>
<dbReference type="GO" id="GO:0102264">
    <property type="term" value="F:tRNA-dihydrouridine20 synthase activity"/>
    <property type="evidence" value="ECO:0000269"/>
    <property type="project" value="PomBase"/>
</dbReference>
<dbReference type="GO" id="GO:0006397">
    <property type="term" value="P:mRNA processing"/>
    <property type="evidence" value="ECO:0007669"/>
    <property type="project" value="UniProtKB-KW"/>
</dbReference>
<dbReference type="GO" id="GO:0002943">
    <property type="term" value="P:tRNA dihydrouridine synthesis"/>
    <property type="evidence" value="ECO:0000318"/>
    <property type="project" value="GO_Central"/>
</dbReference>
<dbReference type="CDD" id="cd02801">
    <property type="entry name" value="DUS_like_FMN"/>
    <property type="match status" value="1"/>
</dbReference>
<dbReference type="FunFam" id="3.20.20.70:FF:000280">
    <property type="entry name" value="tRNA-dihydrouridine synthase"/>
    <property type="match status" value="1"/>
</dbReference>
<dbReference type="Gene3D" id="3.20.20.70">
    <property type="entry name" value="Aldolase class I"/>
    <property type="match status" value="1"/>
</dbReference>
<dbReference type="InterPro" id="IPR013785">
    <property type="entry name" value="Aldolase_TIM"/>
</dbReference>
<dbReference type="InterPro" id="IPR035587">
    <property type="entry name" value="DUS-like_FMN-bd"/>
</dbReference>
<dbReference type="InterPro" id="IPR052582">
    <property type="entry name" value="tRNA-DUS-like"/>
</dbReference>
<dbReference type="InterPro" id="IPR018517">
    <property type="entry name" value="tRNA_hU_synthase_CS"/>
</dbReference>
<dbReference type="PANTHER" id="PTHR45936">
    <property type="entry name" value="TRNA-DIHYDROURIDINE(20) SYNTHASE [NAD(P)+]-LIKE"/>
    <property type="match status" value="1"/>
</dbReference>
<dbReference type="PANTHER" id="PTHR45936:SF1">
    <property type="entry name" value="TRNA-DIHYDROURIDINE(20) SYNTHASE [NAD(P)+]-LIKE"/>
    <property type="match status" value="1"/>
</dbReference>
<dbReference type="Pfam" id="PF01207">
    <property type="entry name" value="Dus"/>
    <property type="match status" value="1"/>
</dbReference>
<dbReference type="SUPFAM" id="SSF51395">
    <property type="entry name" value="FMN-linked oxidoreductases"/>
    <property type="match status" value="1"/>
</dbReference>
<dbReference type="PROSITE" id="PS01136">
    <property type="entry name" value="UPF0034"/>
    <property type="match status" value="1"/>
</dbReference>
<organism>
    <name type="scientific">Schizosaccharomyces pombe (strain 972 / ATCC 24843)</name>
    <name type="common">Fission yeast</name>
    <dbReference type="NCBI Taxonomy" id="284812"/>
    <lineage>
        <taxon>Eukaryota</taxon>
        <taxon>Fungi</taxon>
        <taxon>Dikarya</taxon>
        <taxon>Ascomycota</taxon>
        <taxon>Taphrinomycotina</taxon>
        <taxon>Schizosaccharomycetes</taxon>
        <taxon>Schizosaccharomycetales</taxon>
        <taxon>Schizosaccharomycetaceae</taxon>
        <taxon>Schizosaccharomyces</taxon>
    </lineage>
</organism>
<reference key="1">
    <citation type="journal article" date="2002" name="Nature">
        <title>The genome sequence of Schizosaccharomyces pombe.</title>
        <authorList>
            <person name="Wood V."/>
            <person name="Gwilliam R."/>
            <person name="Rajandream M.A."/>
            <person name="Lyne M.H."/>
            <person name="Lyne R."/>
            <person name="Stewart A."/>
            <person name="Sgouros J.G."/>
            <person name="Peat N."/>
            <person name="Hayles J."/>
            <person name="Baker S.G."/>
            <person name="Basham D."/>
            <person name="Bowman S."/>
            <person name="Brooks K."/>
            <person name="Brown D."/>
            <person name="Brown S."/>
            <person name="Chillingworth T."/>
            <person name="Churcher C.M."/>
            <person name="Collins M."/>
            <person name="Connor R."/>
            <person name="Cronin A."/>
            <person name="Davis P."/>
            <person name="Feltwell T."/>
            <person name="Fraser A."/>
            <person name="Gentles S."/>
            <person name="Goble A."/>
            <person name="Hamlin N."/>
            <person name="Harris D.E."/>
            <person name="Hidalgo J."/>
            <person name="Hodgson G."/>
            <person name="Holroyd S."/>
            <person name="Hornsby T."/>
            <person name="Howarth S."/>
            <person name="Huckle E.J."/>
            <person name="Hunt S."/>
            <person name="Jagels K."/>
            <person name="James K.D."/>
            <person name="Jones L."/>
            <person name="Jones M."/>
            <person name="Leather S."/>
            <person name="McDonald S."/>
            <person name="McLean J."/>
            <person name="Mooney P."/>
            <person name="Moule S."/>
            <person name="Mungall K.L."/>
            <person name="Murphy L.D."/>
            <person name="Niblett D."/>
            <person name="Odell C."/>
            <person name="Oliver K."/>
            <person name="O'Neil S."/>
            <person name="Pearson D."/>
            <person name="Quail M.A."/>
            <person name="Rabbinowitsch E."/>
            <person name="Rutherford K.M."/>
            <person name="Rutter S."/>
            <person name="Saunders D."/>
            <person name="Seeger K."/>
            <person name="Sharp S."/>
            <person name="Skelton J."/>
            <person name="Simmonds M.N."/>
            <person name="Squares R."/>
            <person name="Squares S."/>
            <person name="Stevens K."/>
            <person name="Taylor K."/>
            <person name="Taylor R.G."/>
            <person name="Tivey A."/>
            <person name="Walsh S.V."/>
            <person name="Warren T."/>
            <person name="Whitehead S."/>
            <person name="Woodward J.R."/>
            <person name="Volckaert G."/>
            <person name="Aert R."/>
            <person name="Robben J."/>
            <person name="Grymonprez B."/>
            <person name="Weltjens I."/>
            <person name="Vanstreels E."/>
            <person name="Rieger M."/>
            <person name="Schaefer M."/>
            <person name="Mueller-Auer S."/>
            <person name="Gabel C."/>
            <person name="Fuchs M."/>
            <person name="Duesterhoeft A."/>
            <person name="Fritzc C."/>
            <person name="Holzer E."/>
            <person name="Moestl D."/>
            <person name="Hilbert H."/>
            <person name="Borzym K."/>
            <person name="Langer I."/>
            <person name="Beck A."/>
            <person name="Lehrach H."/>
            <person name="Reinhardt R."/>
            <person name="Pohl T.M."/>
            <person name="Eger P."/>
            <person name="Zimmermann W."/>
            <person name="Wedler H."/>
            <person name="Wambutt R."/>
            <person name="Purnelle B."/>
            <person name="Goffeau A."/>
            <person name="Cadieu E."/>
            <person name="Dreano S."/>
            <person name="Gloux S."/>
            <person name="Lelaure V."/>
            <person name="Mottier S."/>
            <person name="Galibert F."/>
            <person name="Aves S.J."/>
            <person name="Xiang Z."/>
            <person name="Hunt C."/>
            <person name="Moore K."/>
            <person name="Hurst S.M."/>
            <person name="Lucas M."/>
            <person name="Rochet M."/>
            <person name="Gaillardin C."/>
            <person name="Tallada V.A."/>
            <person name="Garzon A."/>
            <person name="Thode G."/>
            <person name="Daga R.R."/>
            <person name="Cruzado L."/>
            <person name="Jimenez J."/>
            <person name="Sanchez M."/>
            <person name="del Rey F."/>
            <person name="Benito J."/>
            <person name="Dominguez A."/>
            <person name="Revuelta J.L."/>
            <person name="Moreno S."/>
            <person name="Armstrong J."/>
            <person name="Forsburg S.L."/>
            <person name="Cerutti L."/>
            <person name="Lowe T."/>
            <person name="McCombie W.R."/>
            <person name="Paulsen I."/>
            <person name="Potashkin J."/>
            <person name="Shpakovski G.V."/>
            <person name="Ussery D."/>
            <person name="Barrell B.G."/>
            <person name="Nurse P."/>
        </authorList>
    </citation>
    <scope>NUCLEOTIDE SEQUENCE [LARGE SCALE GENOMIC DNA]</scope>
    <source>
        <strain>972 / ATCC 24843</strain>
    </source>
</reference>
<reference key="2">
    <citation type="journal article" date="2006" name="Nat. Biotechnol.">
        <title>ORFeome cloning and global analysis of protein localization in the fission yeast Schizosaccharomyces pombe.</title>
        <authorList>
            <person name="Matsuyama A."/>
            <person name="Arai R."/>
            <person name="Yashiroda Y."/>
            <person name="Shirai A."/>
            <person name="Kamata A."/>
            <person name="Sekido S."/>
            <person name="Kobayashi Y."/>
            <person name="Hashimoto A."/>
            <person name="Hamamoto M."/>
            <person name="Hiraoka Y."/>
            <person name="Horinouchi S."/>
            <person name="Yoshida M."/>
        </authorList>
    </citation>
    <scope>SUBCELLULAR LOCATION [LARGE SCALE ANALYSIS]</scope>
</reference>
<reference key="3">
    <citation type="journal article" date="2021" name="Mol. Cell">
        <title>Transcription-wide mapping of dihydrouridine reveals that mRNA dihydrouridylation is required for meiotic chromosome segregation.</title>
        <authorList>
            <person name="Finet O."/>
            <person name="Yague-Sanz C."/>
            <person name="Krueger L.K."/>
            <person name="Tran P."/>
            <person name="Migeot V."/>
            <person name="Louski M."/>
            <person name="Nevers A."/>
            <person name="Rougemaille M."/>
            <person name="Sun J."/>
            <person name="Ernst F.G.M."/>
            <person name="Wacheul L."/>
            <person name="Wery M."/>
            <person name="Morillon A."/>
            <person name="Dedon P."/>
            <person name="Lafontaine D.L.J."/>
            <person name="Hermand D."/>
        </authorList>
    </citation>
    <scope>FUNCTION</scope>
    <scope>CATALYTIC ACTIVITY</scope>
</reference>
<evidence type="ECO:0000250" key="1">
    <source>
        <dbReference type="UniProtKB" id="P53720"/>
    </source>
</evidence>
<evidence type="ECO:0000250" key="2">
    <source>
        <dbReference type="UniProtKB" id="Q5SMC7"/>
    </source>
</evidence>
<evidence type="ECO:0000269" key="3">
    <source>
    </source>
</evidence>
<evidence type="ECO:0000269" key="4">
    <source>
    </source>
</evidence>
<evidence type="ECO:0000303" key="5">
    <source>
    </source>
</evidence>
<evidence type="ECO:0000305" key="6"/>
<evidence type="ECO:0000305" key="7">
    <source>
    </source>
</evidence>
<evidence type="ECO:0000312" key="8">
    <source>
        <dbReference type="PomBase" id="SPBC1709.06"/>
    </source>
</evidence>
<feature type="chain" id="PRO_0000316226" description="tRNA-dihydrouridine(20) synthase [NAD(P)+]">
    <location>
        <begin position="1"/>
        <end position="479"/>
    </location>
</feature>
<feature type="active site" description="Proton donor" evidence="2">
    <location>
        <position position="116"/>
    </location>
</feature>
<feature type="binding site" evidence="2">
    <location>
        <begin position="14"/>
        <end position="16"/>
    </location>
    <ligand>
        <name>FMN</name>
        <dbReference type="ChEBI" id="CHEBI:58210"/>
    </ligand>
</feature>
<feature type="binding site" evidence="2">
    <location>
        <position position="87"/>
    </location>
    <ligand>
        <name>FMN</name>
        <dbReference type="ChEBI" id="CHEBI:58210"/>
    </ligand>
</feature>
<feature type="binding site" evidence="2">
    <location>
        <position position="159"/>
    </location>
    <ligand>
        <name>FMN</name>
        <dbReference type="ChEBI" id="CHEBI:58210"/>
    </ligand>
</feature>
<feature type="binding site" evidence="2">
    <location>
        <position position="187"/>
    </location>
    <ligand>
        <name>FMN</name>
        <dbReference type="ChEBI" id="CHEBI:58210"/>
    </ligand>
</feature>
<feature type="binding site" evidence="2">
    <location>
        <begin position="221"/>
        <end position="223"/>
    </location>
    <ligand>
        <name>FMN</name>
        <dbReference type="ChEBI" id="CHEBI:58210"/>
    </ligand>
</feature>
<feature type="binding site" evidence="2">
    <location>
        <begin position="245"/>
        <end position="246"/>
    </location>
    <ligand>
        <name>FMN</name>
        <dbReference type="ChEBI" id="CHEBI:58210"/>
    </ligand>
</feature>
<keyword id="KW-0963">Cytoplasm</keyword>
<keyword id="KW-0285">Flavoprotein</keyword>
<keyword id="KW-0288">FMN</keyword>
<keyword id="KW-0507">mRNA processing</keyword>
<keyword id="KW-0520">NAD</keyword>
<keyword id="KW-0521">NADP</keyword>
<keyword id="KW-0539">Nucleus</keyword>
<keyword id="KW-0560">Oxidoreductase</keyword>
<keyword id="KW-1185">Reference proteome</keyword>
<keyword id="KW-0819">tRNA processing</keyword>
<proteinExistence type="evidence at protein level"/>
<gene>
    <name evidence="5 8" type="primary">dus2</name>
    <name type="ORF">SPBC1709.06</name>
</gene>
<protein>
    <recommendedName>
        <fullName>tRNA-dihydrouridine(20) synthase [NAD(P)+]</fullName>
        <ecNumber evidence="7">1.3.1.91</ecNumber>
    </recommendedName>
    <alternativeName>
        <fullName evidence="6">mRNA-dihydrouridine synthase dus2</fullName>
        <ecNumber evidence="4">1.3.1.-</ecNumber>
    </alternativeName>
    <alternativeName>
        <fullName>tRNA-dihydrouridine synthase 2</fullName>
    </alternativeName>
</protein>
<name>DUS2_SCHPO</name>
<accession>O74731</accession>
<comment type="function">
    <text evidence="4">Catalyzes the NADPH-dependent synthesis of dihydrouridine, a modified base found in the D-loop of most tRNAs (PubMed:34798057). Specifically modifies U20 in cytoplasmic tRNAs (PubMed:34798057). Also able to mediate dihydrouridylation of some mRNAs, thereby affecting their translation (PubMed:34798057).</text>
</comment>
<comment type="catalytic activity">
    <reaction evidence="7">
        <text>5,6-dihydrouridine(20) in tRNA + NADP(+) = uridine(20) in tRNA + NADPH + H(+)</text>
        <dbReference type="Rhea" id="RHEA:53336"/>
        <dbReference type="Rhea" id="RHEA-COMP:13533"/>
        <dbReference type="Rhea" id="RHEA-COMP:13534"/>
        <dbReference type="ChEBI" id="CHEBI:15378"/>
        <dbReference type="ChEBI" id="CHEBI:57783"/>
        <dbReference type="ChEBI" id="CHEBI:58349"/>
        <dbReference type="ChEBI" id="CHEBI:65315"/>
        <dbReference type="ChEBI" id="CHEBI:74443"/>
        <dbReference type="EC" id="1.3.1.91"/>
    </reaction>
    <physiologicalReaction direction="right-to-left" evidence="7">
        <dbReference type="Rhea" id="RHEA:53338"/>
    </physiologicalReaction>
</comment>
<comment type="catalytic activity">
    <reaction evidence="7">
        <text>5,6-dihydrouridine(20) in tRNA + NAD(+) = uridine(20) in tRNA + NADH + H(+)</text>
        <dbReference type="Rhea" id="RHEA:53340"/>
        <dbReference type="Rhea" id="RHEA-COMP:13533"/>
        <dbReference type="Rhea" id="RHEA-COMP:13534"/>
        <dbReference type="ChEBI" id="CHEBI:15378"/>
        <dbReference type="ChEBI" id="CHEBI:57540"/>
        <dbReference type="ChEBI" id="CHEBI:57945"/>
        <dbReference type="ChEBI" id="CHEBI:65315"/>
        <dbReference type="ChEBI" id="CHEBI:74443"/>
        <dbReference type="EC" id="1.3.1.91"/>
    </reaction>
    <physiologicalReaction direction="right-to-left" evidence="7">
        <dbReference type="Rhea" id="RHEA:53342"/>
    </physiologicalReaction>
</comment>
<comment type="catalytic activity">
    <reaction evidence="4">
        <text>a 5,6-dihydrouridine in mRNA + NAD(+) = a uridine in mRNA + NADH + H(+)</text>
        <dbReference type="Rhea" id="RHEA:69851"/>
        <dbReference type="Rhea" id="RHEA-COMP:14658"/>
        <dbReference type="Rhea" id="RHEA-COMP:17789"/>
        <dbReference type="ChEBI" id="CHEBI:15378"/>
        <dbReference type="ChEBI" id="CHEBI:57540"/>
        <dbReference type="ChEBI" id="CHEBI:57945"/>
        <dbReference type="ChEBI" id="CHEBI:65315"/>
        <dbReference type="ChEBI" id="CHEBI:74443"/>
    </reaction>
    <physiologicalReaction direction="right-to-left" evidence="7">
        <dbReference type="Rhea" id="RHEA:69853"/>
    </physiologicalReaction>
</comment>
<comment type="catalytic activity">
    <reaction evidence="4">
        <text>a 5,6-dihydrouridine in mRNA + NADP(+) = a uridine in mRNA + NADPH + H(+)</text>
        <dbReference type="Rhea" id="RHEA:69855"/>
        <dbReference type="Rhea" id="RHEA-COMP:14658"/>
        <dbReference type="Rhea" id="RHEA-COMP:17789"/>
        <dbReference type="ChEBI" id="CHEBI:15378"/>
        <dbReference type="ChEBI" id="CHEBI:57783"/>
        <dbReference type="ChEBI" id="CHEBI:58349"/>
        <dbReference type="ChEBI" id="CHEBI:65315"/>
        <dbReference type="ChEBI" id="CHEBI:74443"/>
    </reaction>
    <physiologicalReaction direction="right-to-left" evidence="7">
        <dbReference type="Rhea" id="RHEA:69857"/>
    </physiologicalReaction>
</comment>
<comment type="cofactor">
    <cofactor evidence="2">
        <name>FMN</name>
        <dbReference type="ChEBI" id="CHEBI:58210"/>
    </cofactor>
</comment>
<comment type="subcellular location">
    <subcellularLocation>
        <location evidence="1">Cytoplasm</location>
    </subcellularLocation>
    <subcellularLocation>
        <location evidence="3">Nucleus</location>
    </subcellularLocation>
</comment>
<comment type="similarity">
    <text evidence="6">Belongs to the Dus family. Dus2 subfamily.</text>
</comment>
<sequence>MGLLNYSNKVCLAPMVRIGELPMRLLALRYGANLVWGPEIVDKALLSGTPVERVVNDRINCIDFVKPPSNKVLFRVHPLEANRLIFQLGSASPELAVEAAKLVANDVAGIDLNCGCPKHFSVHAGMGAGLLKNQDRLVSILDALVNEIGKPYKISISCKIRLLETKEDTLKLVERICDTGVRAITVHCRTTPMRNTEPADRSYLSEIVGVCRNKDVSILVNGDVLSYNDGLDVIEKYGVDGVLIARAAERNVSCFRIEGPLSSFKVAEEFLKMALEVDNNFGNTKYCLNQIMQGSFRKNVRQLAQTAKTYEDLKKAFEIEYKHSDASSVCPTLEKEKSLVISFVDLPSFLESLLASNILKQLSRLHFTKIFAVSEEEDICKQLDDIHEKFLCHGIALSLISADNLASAIASAHLVICMEKDESIMNEAVCDQKITIRLPINSNTNEAVVECENKSMQSKHALDIIQERIKDLEEKAQVV</sequence>